<evidence type="ECO:0000255" key="1">
    <source>
        <dbReference type="HAMAP-Rule" id="MF_01871"/>
    </source>
</evidence>
<accession>B0UBZ5</accession>
<proteinExistence type="inferred from homology"/>
<comment type="function">
    <text evidence="1">Part of an energy-coupled inorganic carbon pump.</text>
</comment>
<comment type="cofactor">
    <cofactor evidence="1">
        <name>Zn(2+)</name>
        <dbReference type="ChEBI" id="CHEBI:29105"/>
    </cofactor>
</comment>
<comment type="subunit">
    <text evidence="1">Forms a complex with DabB.</text>
</comment>
<comment type="subcellular location">
    <subcellularLocation>
        <location evidence="1">Cell inner membrane</location>
        <topology evidence="1">Peripheral membrane protein</topology>
    </subcellularLocation>
</comment>
<comment type="similarity">
    <text evidence="1">Belongs to the inorganic carbon transporter (TC 9.A.2) DabA family.</text>
</comment>
<sequence>MIEIVHSLPTPHDAVRAAADGAGRLIPPLWPLASSVAVNPFLGHTGEPLWAAGARLGRASGAAVTMPRSWYRDRIAAGSITDEDLLDALADAPADLRPADLGALRGAAALDPEPVRPLPTVASLCAEASGIDWPGLIADRLGAWAAGHFDEGQALWAAPSGGSTLALWRAWAIHDLTPEIAGLGGFARHVSEVPDGALPALARAVCGLGLSPGALESYFHQILLSLGGWAQYARYKLWQAELAGGTDGTLRDLLAVRVIWDEALLTRYGERIAESWAAVAAAHASPARPTRDLVIDSILQDAAERAAQRALAATLAATLAGGSPGVGESRPALQAAFCIDVRSEVFRRALESLDPGIRTLGFAGFFGLATAHRRFASDIAERRLPVLLNPGLRTCAGGPALSDADHASRLAARARRAWGRFRQAAVSSFAFVEAAGPLYAAKLLGDSLHLGGPATPHDPMPRLDPPRDLASRVATADAVLRAMSLTSTFAPIVLLVGHGANVVNNPHASALHCGACGGYSGEVNARLLAQLLNDADVRAGLRERGLEVPADTVFLAGLHDTTTDEVTLYAGDLPGGSPLQGLEPVRVWLAQAGKLARAERALRLPRARDNASVVRRSRDWAETRPEWGLAGCNAFIAAPRHRTAGQPLHGRAFLHDYDWQRDEGFGVLELIVTAPVVVASWISLQYYGSTVAPELFGSGNKLLHNVVGGIGVLEGNGGPLRAGLPRQSVHDGEHHAHEPLRLSVLIEAPRQAITDVLERHREVRALFDNRWLHLFALDQDGRMAWRYAGDLRWTSTAASDGAVPGLPLRAAV</sequence>
<name>DABA_METS4</name>
<dbReference type="EMBL" id="CP000943">
    <property type="protein sequence ID" value="ACA19955.1"/>
    <property type="molecule type" value="Genomic_DNA"/>
</dbReference>
<dbReference type="RefSeq" id="WP_012335333.1">
    <property type="nucleotide sequence ID" value="NC_010511.1"/>
</dbReference>
<dbReference type="STRING" id="426117.M446_5662"/>
<dbReference type="KEGG" id="met:M446_5662"/>
<dbReference type="eggNOG" id="COG3002">
    <property type="taxonomic scope" value="Bacteria"/>
</dbReference>
<dbReference type="HOGENOM" id="CLU_009885_1_0_5"/>
<dbReference type="GO" id="GO:0005886">
    <property type="term" value="C:plasma membrane"/>
    <property type="evidence" value="ECO:0007669"/>
    <property type="project" value="UniProtKB-SubCell"/>
</dbReference>
<dbReference type="GO" id="GO:0008270">
    <property type="term" value="F:zinc ion binding"/>
    <property type="evidence" value="ECO:0007669"/>
    <property type="project" value="UniProtKB-UniRule"/>
</dbReference>
<dbReference type="HAMAP" id="MF_01871">
    <property type="entry name" value="DabA"/>
    <property type="match status" value="1"/>
</dbReference>
<dbReference type="InterPro" id="IPR018752">
    <property type="entry name" value="DabA"/>
</dbReference>
<dbReference type="PANTHER" id="PTHR38344:SF1">
    <property type="entry name" value="INORGANIC CARBON TRANSPORTER SUBUNIT DABA-RELATED"/>
    <property type="match status" value="1"/>
</dbReference>
<dbReference type="PANTHER" id="PTHR38344">
    <property type="entry name" value="UPF0753 PROTEIN AQ_863"/>
    <property type="match status" value="1"/>
</dbReference>
<dbReference type="Pfam" id="PF10070">
    <property type="entry name" value="DabA"/>
    <property type="match status" value="1"/>
</dbReference>
<organism>
    <name type="scientific">Methylobacterium sp. (strain 4-46)</name>
    <dbReference type="NCBI Taxonomy" id="426117"/>
    <lineage>
        <taxon>Bacteria</taxon>
        <taxon>Pseudomonadati</taxon>
        <taxon>Pseudomonadota</taxon>
        <taxon>Alphaproteobacteria</taxon>
        <taxon>Hyphomicrobiales</taxon>
        <taxon>Methylobacteriaceae</taxon>
        <taxon>Methylobacterium</taxon>
    </lineage>
</organism>
<keyword id="KW-0997">Cell inner membrane</keyword>
<keyword id="KW-1003">Cell membrane</keyword>
<keyword id="KW-0472">Membrane</keyword>
<keyword id="KW-0479">Metal-binding</keyword>
<keyword id="KW-0813">Transport</keyword>
<keyword id="KW-0862">Zinc</keyword>
<feature type="chain" id="PRO_0000387275" description="Probable inorganic carbon transporter subunit DabA">
    <location>
        <begin position="1"/>
        <end position="812"/>
    </location>
</feature>
<feature type="binding site" evidence="1">
    <location>
        <position position="338"/>
    </location>
    <ligand>
        <name>Zn(2+)</name>
        <dbReference type="ChEBI" id="CHEBI:29105"/>
    </ligand>
</feature>
<feature type="binding site" evidence="1">
    <location>
        <position position="340"/>
    </location>
    <ligand>
        <name>Zn(2+)</name>
        <dbReference type="ChEBI" id="CHEBI:29105"/>
    </ligand>
</feature>
<feature type="binding site" evidence="1">
    <location>
        <position position="498"/>
    </location>
    <ligand>
        <name>Zn(2+)</name>
        <dbReference type="ChEBI" id="CHEBI:29105"/>
    </ligand>
</feature>
<feature type="binding site" evidence="1">
    <location>
        <position position="513"/>
    </location>
    <ligand>
        <name>Zn(2+)</name>
        <dbReference type="ChEBI" id="CHEBI:29105"/>
    </ligand>
</feature>
<protein>
    <recommendedName>
        <fullName evidence="1">Probable inorganic carbon transporter subunit DabA</fullName>
    </recommendedName>
</protein>
<gene>
    <name evidence="1" type="primary">dabA</name>
    <name type="ordered locus">M446_5662</name>
</gene>
<reference key="1">
    <citation type="submission" date="2008-02" db="EMBL/GenBank/DDBJ databases">
        <title>Complete sequence of chromosome of Methylobacterium sp. 4-46.</title>
        <authorList>
            <consortium name="US DOE Joint Genome Institute"/>
            <person name="Copeland A."/>
            <person name="Lucas S."/>
            <person name="Lapidus A."/>
            <person name="Glavina del Rio T."/>
            <person name="Dalin E."/>
            <person name="Tice H."/>
            <person name="Bruce D."/>
            <person name="Goodwin L."/>
            <person name="Pitluck S."/>
            <person name="Chertkov O."/>
            <person name="Brettin T."/>
            <person name="Detter J.C."/>
            <person name="Han C."/>
            <person name="Kuske C.R."/>
            <person name="Schmutz J."/>
            <person name="Larimer F."/>
            <person name="Land M."/>
            <person name="Hauser L."/>
            <person name="Kyrpides N."/>
            <person name="Ivanova N."/>
            <person name="Marx C.J."/>
            <person name="Richardson P."/>
        </authorList>
    </citation>
    <scope>NUCLEOTIDE SEQUENCE [LARGE SCALE GENOMIC DNA]</scope>
    <source>
        <strain>4-46</strain>
    </source>
</reference>